<keyword id="KW-0414">Isoprene biosynthesis</keyword>
<keyword id="KW-0548">Nucleotidyltransferase</keyword>
<keyword id="KW-1185">Reference proteome</keyword>
<keyword id="KW-0808">Transferase</keyword>
<name>ISPD_CHLTE</name>
<organism>
    <name type="scientific">Chlorobaculum tepidum (strain ATCC 49652 / DSM 12025 / NBRC 103806 / TLS)</name>
    <name type="common">Chlorobium tepidum</name>
    <dbReference type="NCBI Taxonomy" id="194439"/>
    <lineage>
        <taxon>Bacteria</taxon>
        <taxon>Pseudomonadati</taxon>
        <taxon>Chlorobiota</taxon>
        <taxon>Chlorobiia</taxon>
        <taxon>Chlorobiales</taxon>
        <taxon>Chlorobiaceae</taxon>
        <taxon>Chlorobaculum</taxon>
    </lineage>
</organism>
<reference key="1">
    <citation type="journal article" date="2002" name="Proc. Natl. Acad. Sci. U.S.A.">
        <title>The complete genome sequence of Chlorobium tepidum TLS, a photosynthetic, anaerobic, green-sulfur bacterium.</title>
        <authorList>
            <person name="Eisen J.A."/>
            <person name="Nelson K.E."/>
            <person name="Paulsen I.T."/>
            <person name="Heidelberg J.F."/>
            <person name="Wu M."/>
            <person name="Dodson R.J."/>
            <person name="DeBoy R.T."/>
            <person name="Gwinn M.L."/>
            <person name="Nelson W.C."/>
            <person name="Haft D.H."/>
            <person name="Hickey E.K."/>
            <person name="Peterson J.D."/>
            <person name="Durkin A.S."/>
            <person name="Kolonay J.F."/>
            <person name="Yang F."/>
            <person name="Holt I.E."/>
            <person name="Umayam L.A."/>
            <person name="Mason T.M."/>
            <person name="Brenner M."/>
            <person name="Shea T.P."/>
            <person name="Parksey D.S."/>
            <person name="Nierman W.C."/>
            <person name="Feldblyum T.V."/>
            <person name="Hansen C.L."/>
            <person name="Craven M.B."/>
            <person name="Radune D."/>
            <person name="Vamathevan J.J."/>
            <person name="Khouri H.M."/>
            <person name="White O."/>
            <person name="Gruber T.M."/>
            <person name="Ketchum K.A."/>
            <person name="Venter J.C."/>
            <person name="Tettelin H."/>
            <person name="Bryant D.A."/>
            <person name="Fraser C.M."/>
        </authorList>
    </citation>
    <scope>NUCLEOTIDE SEQUENCE [LARGE SCALE GENOMIC DNA]</scope>
    <source>
        <strain>ATCC 49652 / DSM 12025 / NBRC 103806 / TLS</strain>
    </source>
</reference>
<evidence type="ECO:0000255" key="1">
    <source>
        <dbReference type="HAMAP-Rule" id="MF_00108"/>
    </source>
</evidence>
<feature type="chain" id="PRO_0000075562" description="2-C-methyl-D-erythritol 4-phosphate cytidylyltransferase">
    <location>
        <begin position="1"/>
        <end position="246"/>
    </location>
</feature>
<feature type="site" description="Transition state stabilizer" evidence="1">
    <location>
        <position position="15"/>
    </location>
</feature>
<feature type="site" description="Transition state stabilizer" evidence="1">
    <location>
        <position position="24"/>
    </location>
</feature>
<feature type="site" description="Positions MEP for the nucleophilic attack" evidence="1">
    <location>
        <position position="164"/>
    </location>
</feature>
<feature type="site" description="Positions MEP for the nucleophilic attack" evidence="1">
    <location>
        <position position="222"/>
    </location>
</feature>
<protein>
    <recommendedName>
        <fullName evidence="1">2-C-methyl-D-erythritol 4-phosphate cytidylyltransferase</fullName>
        <ecNumber evidence="1">2.7.7.60</ecNumber>
    </recommendedName>
    <alternativeName>
        <fullName evidence="1">4-diphosphocytidyl-2C-methyl-D-erythritol synthase</fullName>
    </alternativeName>
    <alternativeName>
        <fullName evidence="1">MEP cytidylyltransferase</fullName>
        <shortName evidence="1">MCT</shortName>
    </alternativeName>
</protein>
<dbReference type="EC" id="2.7.7.60" evidence="1"/>
<dbReference type="EMBL" id="AE006470">
    <property type="protein sequence ID" value="AAM72547.1"/>
    <property type="molecule type" value="Genomic_DNA"/>
</dbReference>
<dbReference type="RefSeq" id="NP_662205.1">
    <property type="nucleotide sequence ID" value="NC_002932.3"/>
</dbReference>
<dbReference type="RefSeq" id="WP_010932986.1">
    <property type="nucleotide sequence ID" value="NC_002932.3"/>
</dbReference>
<dbReference type="SMR" id="Q8KCU3"/>
<dbReference type="STRING" id="194439.CT1317"/>
<dbReference type="EnsemblBacteria" id="AAM72547">
    <property type="protein sequence ID" value="AAM72547"/>
    <property type="gene ID" value="CT1317"/>
</dbReference>
<dbReference type="KEGG" id="cte:CT1317"/>
<dbReference type="PATRIC" id="fig|194439.7.peg.1200"/>
<dbReference type="eggNOG" id="COG1211">
    <property type="taxonomic scope" value="Bacteria"/>
</dbReference>
<dbReference type="HOGENOM" id="CLU_061281_2_2_10"/>
<dbReference type="OrthoDB" id="9806837at2"/>
<dbReference type="UniPathway" id="UPA00056">
    <property type="reaction ID" value="UER00093"/>
</dbReference>
<dbReference type="Proteomes" id="UP000001007">
    <property type="component" value="Chromosome"/>
</dbReference>
<dbReference type="GO" id="GO:0050518">
    <property type="term" value="F:2-C-methyl-D-erythritol 4-phosphate cytidylyltransferase activity"/>
    <property type="evidence" value="ECO:0007669"/>
    <property type="project" value="UniProtKB-UniRule"/>
</dbReference>
<dbReference type="GO" id="GO:0019288">
    <property type="term" value="P:isopentenyl diphosphate biosynthetic process, methylerythritol 4-phosphate pathway"/>
    <property type="evidence" value="ECO:0007669"/>
    <property type="project" value="UniProtKB-UniRule"/>
</dbReference>
<dbReference type="CDD" id="cd02516">
    <property type="entry name" value="CDP-ME_synthetase"/>
    <property type="match status" value="1"/>
</dbReference>
<dbReference type="FunFam" id="3.90.550.10:FF:000003">
    <property type="entry name" value="2-C-methyl-D-erythritol 4-phosphate cytidylyltransferase"/>
    <property type="match status" value="1"/>
</dbReference>
<dbReference type="Gene3D" id="3.90.550.10">
    <property type="entry name" value="Spore Coat Polysaccharide Biosynthesis Protein SpsA, Chain A"/>
    <property type="match status" value="1"/>
</dbReference>
<dbReference type="HAMAP" id="MF_00108">
    <property type="entry name" value="IspD"/>
    <property type="match status" value="1"/>
</dbReference>
<dbReference type="InterPro" id="IPR001228">
    <property type="entry name" value="IspD"/>
</dbReference>
<dbReference type="InterPro" id="IPR034683">
    <property type="entry name" value="IspD/TarI"/>
</dbReference>
<dbReference type="InterPro" id="IPR050088">
    <property type="entry name" value="IspD/TarI_cytidylyltransf_bact"/>
</dbReference>
<dbReference type="InterPro" id="IPR018294">
    <property type="entry name" value="ISPD_synthase_CS"/>
</dbReference>
<dbReference type="InterPro" id="IPR029044">
    <property type="entry name" value="Nucleotide-diphossugar_trans"/>
</dbReference>
<dbReference type="PANTHER" id="PTHR32125">
    <property type="entry name" value="2-C-METHYL-D-ERYTHRITOL 4-PHOSPHATE CYTIDYLYLTRANSFERASE, CHLOROPLASTIC"/>
    <property type="match status" value="1"/>
</dbReference>
<dbReference type="PANTHER" id="PTHR32125:SF4">
    <property type="entry name" value="2-C-METHYL-D-ERYTHRITOL 4-PHOSPHATE CYTIDYLYLTRANSFERASE, CHLOROPLASTIC"/>
    <property type="match status" value="1"/>
</dbReference>
<dbReference type="Pfam" id="PF01128">
    <property type="entry name" value="IspD"/>
    <property type="match status" value="1"/>
</dbReference>
<dbReference type="SUPFAM" id="SSF53448">
    <property type="entry name" value="Nucleotide-diphospho-sugar transferases"/>
    <property type="match status" value="1"/>
</dbReference>
<dbReference type="PROSITE" id="PS01295">
    <property type="entry name" value="ISPD"/>
    <property type="match status" value="1"/>
</dbReference>
<gene>
    <name evidence="1" type="primary">ispD</name>
    <name type="ordered locus">CT1317</name>
</gene>
<accession>Q8KCU3</accession>
<proteinExistence type="inferred from homology"/>
<sequence length="246" mass="27022">MKTVVIIAASGVGKRMKLDGGRSKQMLEIGGQPVIWHTMKAFQEASTVESVYIATLPDSIPVFKEIAKANGFTKITAIIEGGKERQDSIGNCMKLIEQEIENSGVMPDAILVHDGARPFIQPEEIDDIARLSATHGACVPATKPKDTIKYVGCNPEIFGETLDRSRLLQVQTPQGFAPAKLIEAHRLAGEEQWYATDDAALVERYFPQQAIRIYETGYHNIKITTPEDVFIGEAILAGLKARKSKN</sequence>
<comment type="function">
    <text evidence="1">Catalyzes the formation of 4-diphosphocytidyl-2-C-methyl-D-erythritol from CTP and 2-C-methyl-D-erythritol 4-phosphate (MEP).</text>
</comment>
<comment type="catalytic activity">
    <reaction evidence="1">
        <text>2-C-methyl-D-erythritol 4-phosphate + CTP + H(+) = 4-CDP-2-C-methyl-D-erythritol + diphosphate</text>
        <dbReference type="Rhea" id="RHEA:13429"/>
        <dbReference type="ChEBI" id="CHEBI:15378"/>
        <dbReference type="ChEBI" id="CHEBI:33019"/>
        <dbReference type="ChEBI" id="CHEBI:37563"/>
        <dbReference type="ChEBI" id="CHEBI:57823"/>
        <dbReference type="ChEBI" id="CHEBI:58262"/>
        <dbReference type="EC" id="2.7.7.60"/>
    </reaction>
</comment>
<comment type="pathway">
    <text evidence="1">Isoprenoid biosynthesis; isopentenyl diphosphate biosynthesis via DXP pathway; isopentenyl diphosphate from 1-deoxy-D-xylulose 5-phosphate: step 2/6.</text>
</comment>
<comment type="similarity">
    <text evidence="1">Belongs to the IspD/TarI cytidylyltransferase family. IspD subfamily.</text>
</comment>